<protein>
    <recommendedName>
        <fullName evidence="1">UDP-N-acetylglucosamine--N-acetylmuramyl-(pentapeptide) pyrophosphoryl-undecaprenol N-acetylglucosamine transferase</fullName>
        <ecNumber evidence="1">2.4.1.227</ecNumber>
    </recommendedName>
    <alternativeName>
        <fullName evidence="1">Undecaprenyl-PP-MurNAc-pentapeptide-UDPGlcNAc GlcNAc transferase</fullName>
    </alternativeName>
</protein>
<feature type="chain" id="PRO_0000225071" description="UDP-N-acetylglucosamine--N-acetylmuramyl-(pentapeptide) pyrophosphoryl-undecaprenol N-acetylglucosamine transferase">
    <location>
        <begin position="1"/>
        <end position="359"/>
    </location>
</feature>
<feature type="binding site" evidence="1">
    <location>
        <begin position="12"/>
        <end position="14"/>
    </location>
    <ligand>
        <name>UDP-N-acetyl-alpha-D-glucosamine</name>
        <dbReference type="ChEBI" id="CHEBI:57705"/>
    </ligand>
</feature>
<feature type="binding site" evidence="1">
    <location>
        <position position="124"/>
    </location>
    <ligand>
        <name>UDP-N-acetyl-alpha-D-glucosamine</name>
        <dbReference type="ChEBI" id="CHEBI:57705"/>
    </ligand>
</feature>
<feature type="binding site" evidence="1">
    <location>
        <position position="163"/>
    </location>
    <ligand>
        <name>UDP-N-acetyl-alpha-D-glucosamine</name>
        <dbReference type="ChEBI" id="CHEBI:57705"/>
    </ligand>
</feature>
<feature type="binding site" evidence="1">
    <location>
        <position position="191"/>
    </location>
    <ligand>
        <name>UDP-N-acetyl-alpha-D-glucosamine</name>
        <dbReference type="ChEBI" id="CHEBI:57705"/>
    </ligand>
</feature>
<feature type="binding site" evidence="1">
    <location>
        <position position="245"/>
    </location>
    <ligand>
        <name>UDP-N-acetyl-alpha-D-glucosamine</name>
        <dbReference type="ChEBI" id="CHEBI:57705"/>
    </ligand>
</feature>
<feature type="binding site" evidence="1">
    <location>
        <begin position="264"/>
        <end position="269"/>
    </location>
    <ligand>
        <name>UDP-N-acetyl-alpha-D-glucosamine</name>
        <dbReference type="ChEBI" id="CHEBI:57705"/>
    </ligand>
</feature>
<feature type="binding site" evidence="1">
    <location>
        <position position="290"/>
    </location>
    <ligand>
        <name>UDP-N-acetyl-alpha-D-glucosamine</name>
        <dbReference type="ChEBI" id="CHEBI:57705"/>
    </ligand>
</feature>
<gene>
    <name evidence="1" type="primary">murG</name>
    <name type="ordered locus">Noc_2861</name>
</gene>
<comment type="function">
    <text evidence="1">Cell wall formation. Catalyzes the transfer of a GlcNAc subunit on undecaprenyl-pyrophosphoryl-MurNAc-pentapeptide (lipid intermediate I) to form undecaprenyl-pyrophosphoryl-MurNAc-(pentapeptide)GlcNAc (lipid intermediate II).</text>
</comment>
<comment type="catalytic activity">
    <reaction evidence="1">
        <text>di-trans,octa-cis-undecaprenyl diphospho-N-acetyl-alpha-D-muramoyl-L-alanyl-D-glutamyl-meso-2,6-diaminopimeloyl-D-alanyl-D-alanine + UDP-N-acetyl-alpha-D-glucosamine = di-trans,octa-cis-undecaprenyl diphospho-[N-acetyl-alpha-D-glucosaminyl-(1-&gt;4)]-N-acetyl-alpha-D-muramoyl-L-alanyl-D-glutamyl-meso-2,6-diaminopimeloyl-D-alanyl-D-alanine + UDP + H(+)</text>
        <dbReference type="Rhea" id="RHEA:31227"/>
        <dbReference type="ChEBI" id="CHEBI:15378"/>
        <dbReference type="ChEBI" id="CHEBI:57705"/>
        <dbReference type="ChEBI" id="CHEBI:58223"/>
        <dbReference type="ChEBI" id="CHEBI:61387"/>
        <dbReference type="ChEBI" id="CHEBI:61388"/>
        <dbReference type="EC" id="2.4.1.227"/>
    </reaction>
</comment>
<comment type="pathway">
    <text evidence="1">Cell wall biogenesis; peptidoglycan biosynthesis.</text>
</comment>
<comment type="subcellular location">
    <subcellularLocation>
        <location evidence="1">Cell inner membrane</location>
        <topology evidence="1">Peripheral membrane protein</topology>
        <orientation evidence="1">Cytoplasmic side</orientation>
    </subcellularLocation>
</comment>
<comment type="similarity">
    <text evidence="1">Belongs to the glycosyltransferase 28 family. MurG subfamily.</text>
</comment>
<organism>
    <name type="scientific">Nitrosococcus oceani (strain ATCC 19707 / BCRC 17464 / JCM 30415 / NCIMB 11848 / C-107)</name>
    <dbReference type="NCBI Taxonomy" id="323261"/>
    <lineage>
        <taxon>Bacteria</taxon>
        <taxon>Pseudomonadati</taxon>
        <taxon>Pseudomonadota</taxon>
        <taxon>Gammaproteobacteria</taxon>
        <taxon>Chromatiales</taxon>
        <taxon>Chromatiaceae</taxon>
        <taxon>Nitrosococcus</taxon>
    </lineage>
</organism>
<reference key="1">
    <citation type="journal article" date="2006" name="Appl. Environ. Microbiol.">
        <title>Complete genome sequence of the marine, chemolithoautotrophic, ammonia-oxidizing bacterium Nitrosococcus oceani ATCC 19707.</title>
        <authorList>
            <person name="Klotz M.G."/>
            <person name="Arp D.J."/>
            <person name="Chain P.S.G."/>
            <person name="El-Sheikh A.F."/>
            <person name="Hauser L.J."/>
            <person name="Hommes N.G."/>
            <person name="Larimer F.W."/>
            <person name="Malfatti S.A."/>
            <person name="Norton J.M."/>
            <person name="Poret-Peterson A.T."/>
            <person name="Vergez L.M."/>
            <person name="Ward B.B."/>
        </authorList>
    </citation>
    <scope>NUCLEOTIDE SEQUENCE [LARGE SCALE GENOMIC DNA]</scope>
    <source>
        <strain>ATCC 19707 / BCRC 17464 / JCM 30415 / NCIMB 11848 / C-107</strain>
    </source>
</reference>
<proteinExistence type="inferred from homology"/>
<name>MURG_NITOC</name>
<keyword id="KW-0131">Cell cycle</keyword>
<keyword id="KW-0132">Cell division</keyword>
<keyword id="KW-0997">Cell inner membrane</keyword>
<keyword id="KW-1003">Cell membrane</keyword>
<keyword id="KW-0133">Cell shape</keyword>
<keyword id="KW-0961">Cell wall biogenesis/degradation</keyword>
<keyword id="KW-0328">Glycosyltransferase</keyword>
<keyword id="KW-0472">Membrane</keyword>
<keyword id="KW-0573">Peptidoglycan synthesis</keyword>
<keyword id="KW-1185">Reference proteome</keyword>
<keyword id="KW-0808">Transferase</keyword>
<sequence length="359" mass="38548">MAIRVLIMAGGTGGHIFPALAVADRLRAWGVEVVWMGTRHGLEAELVPKAGYPIEWISIGGLRGKGLTHWLRAPFKLLLALSQALRALRRWQPAVVLGLGGFVSGPGGLGAWLLRRPLLIHEQNAIVGTANRLLAPLAGRVMEAFPGTFPPARKAEWTGNPVRESIEQLSESRARLQARQGCFHLLVLGGSQGARILNETVPQALALLPTKVRPQVWHQCGSRQWEGAVVAYRAAGVEARLVPFIDDMAAAYAWADLVVCRAGALTVAELMAAGIGALLVPFPLAIDDHQRANADYLVVAGAALLLPEKELSPSRLAQEIERLGADYSTFISMAQAARQLHRVGAAQRVAERCLEVASG</sequence>
<dbReference type="EC" id="2.4.1.227" evidence="1"/>
<dbReference type="EMBL" id="CP000127">
    <property type="protein sequence ID" value="ABA59307.1"/>
    <property type="molecule type" value="Genomic_DNA"/>
</dbReference>
<dbReference type="RefSeq" id="WP_002813415.1">
    <property type="nucleotide sequence ID" value="NC_007484.1"/>
</dbReference>
<dbReference type="SMR" id="Q3J789"/>
<dbReference type="FunCoup" id="Q3J789">
    <property type="interactions" value="307"/>
</dbReference>
<dbReference type="STRING" id="323261.Noc_2861"/>
<dbReference type="CAZy" id="GT28">
    <property type="family name" value="Glycosyltransferase Family 28"/>
</dbReference>
<dbReference type="KEGG" id="noc:Noc_2861"/>
<dbReference type="eggNOG" id="COG0707">
    <property type="taxonomic scope" value="Bacteria"/>
</dbReference>
<dbReference type="HOGENOM" id="CLU_037404_2_0_6"/>
<dbReference type="InParanoid" id="Q3J789"/>
<dbReference type="UniPathway" id="UPA00219"/>
<dbReference type="Proteomes" id="UP000006838">
    <property type="component" value="Chromosome"/>
</dbReference>
<dbReference type="GO" id="GO:0005886">
    <property type="term" value="C:plasma membrane"/>
    <property type="evidence" value="ECO:0007669"/>
    <property type="project" value="UniProtKB-SubCell"/>
</dbReference>
<dbReference type="GO" id="GO:0051991">
    <property type="term" value="F:UDP-N-acetyl-D-glucosamine:N-acetylmuramoyl-L-alanyl-D-glutamyl-meso-2,6-diaminopimelyl-D-alanyl-D-alanine-diphosphoundecaprenol 4-beta-N-acetylglucosaminlytransferase activity"/>
    <property type="evidence" value="ECO:0007669"/>
    <property type="project" value="RHEA"/>
</dbReference>
<dbReference type="GO" id="GO:0050511">
    <property type="term" value="F:undecaprenyldiphospho-muramoylpentapeptide beta-N-acetylglucosaminyltransferase activity"/>
    <property type="evidence" value="ECO:0007669"/>
    <property type="project" value="UniProtKB-UniRule"/>
</dbReference>
<dbReference type="GO" id="GO:0005975">
    <property type="term" value="P:carbohydrate metabolic process"/>
    <property type="evidence" value="ECO:0007669"/>
    <property type="project" value="InterPro"/>
</dbReference>
<dbReference type="GO" id="GO:0051301">
    <property type="term" value="P:cell division"/>
    <property type="evidence" value="ECO:0007669"/>
    <property type="project" value="UniProtKB-KW"/>
</dbReference>
<dbReference type="GO" id="GO:0071555">
    <property type="term" value="P:cell wall organization"/>
    <property type="evidence" value="ECO:0007669"/>
    <property type="project" value="UniProtKB-KW"/>
</dbReference>
<dbReference type="GO" id="GO:0030259">
    <property type="term" value="P:lipid glycosylation"/>
    <property type="evidence" value="ECO:0007669"/>
    <property type="project" value="UniProtKB-UniRule"/>
</dbReference>
<dbReference type="GO" id="GO:0009252">
    <property type="term" value="P:peptidoglycan biosynthetic process"/>
    <property type="evidence" value="ECO:0007669"/>
    <property type="project" value="UniProtKB-UniRule"/>
</dbReference>
<dbReference type="GO" id="GO:0008360">
    <property type="term" value="P:regulation of cell shape"/>
    <property type="evidence" value="ECO:0007669"/>
    <property type="project" value="UniProtKB-KW"/>
</dbReference>
<dbReference type="CDD" id="cd03785">
    <property type="entry name" value="GT28_MurG"/>
    <property type="match status" value="1"/>
</dbReference>
<dbReference type="Gene3D" id="3.40.50.2000">
    <property type="entry name" value="Glycogen Phosphorylase B"/>
    <property type="match status" value="2"/>
</dbReference>
<dbReference type="HAMAP" id="MF_00033">
    <property type="entry name" value="MurG"/>
    <property type="match status" value="1"/>
</dbReference>
<dbReference type="InterPro" id="IPR006009">
    <property type="entry name" value="GlcNAc_MurG"/>
</dbReference>
<dbReference type="InterPro" id="IPR007235">
    <property type="entry name" value="Glyco_trans_28_C"/>
</dbReference>
<dbReference type="InterPro" id="IPR004276">
    <property type="entry name" value="GlycoTrans_28_N"/>
</dbReference>
<dbReference type="NCBIfam" id="TIGR01133">
    <property type="entry name" value="murG"/>
    <property type="match status" value="1"/>
</dbReference>
<dbReference type="PANTHER" id="PTHR21015:SF22">
    <property type="entry name" value="GLYCOSYLTRANSFERASE"/>
    <property type="match status" value="1"/>
</dbReference>
<dbReference type="PANTHER" id="PTHR21015">
    <property type="entry name" value="UDP-N-ACETYLGLUCOSAMINE--N-ACETYLMURAMYL-(PENTAPEPTIDE) PYROPHOSPHORYL-UNDECAPRENOL N-ACETYLGLUCOSAMINE TRANSFERASE 1"/>
    <property type="match status" value="1"/>
</dbReference>
<dbReference type="Pfam" id="PF04101">
    <property type="entry name" value="Glyco_tran_28_C"/>
    <property type="match status" value="1"/>
</dbReference>
<dbReference type="Pfam" id="PF03033">
    <property type="entry name" value="Glyco_transf_28"/>
    <property type="match status" value="1"/>
</dbReference>
<dbReference type="SUPFAM" id="SSF53756">
    <property type="entry name" value="UDP-Glycosyltransferase/glycogen phosphorylase"/>
    <property type="match status" value="1"/>
</dbReference>
<accession>Q3J789</accession>
<evidence type="ECO:0000255" key="1">
    <source>
        <dbReference type="HAMAP-Rule" id="MF_00033"/>
    </source>
</evidence>